<dbReference type="EC" id="4.2.1.33" evidence="1"/>
<dbReference type="EMBL" id="CP000854">
    <property type="protein sequence ID" value="ACC40175.1"/>
    <property type="molecule type" value="Genomic_DNA"/>
</dbReference>
<dbReference type="RefSeq" id="WP_012393540.1">
    <property type="nucleotide sequence ID" value="NC_010612.1"/>
</dbReference>
<dbReference type="SMR" id="B2HII1"/>
<dbReference type="STRING" id="216594.MMAR_1726"/>
<dbReference type="KEGG" id="mmi:MMAR_1726"/>
<dbReference type="eggNOG" id="COG0065">
    <property type="taxonomic scope" value="Bacteria"/>
</dbReference>
<dbReference type="HOGENOM" id="CLU_006714_3_4_11"/>
<dbReference type="OrthoDB" id="9802769at2"/>
<dbReference type="UniPathway" id="UPA00048">
    <property type="reaction ID" value="UER00071"/>
</dbReference>
<dbReference type="Proteomes" id="UP000001190">
    <property type="component" value="Chromosome"/>
</dbReference>
<dbReference type="GO" id="GO:0003861">
    <property type="term" value="F:3-isopropylmalate dehydratase activity"/>
    <property type="evidence" value="ECO:0007669"/>
    <property type="project" value="UniProtKB-UniRule"/>
</dbReference>
<dbReference type="GO" id="GO:0051539">
    <property type="term" value="F:4 iron, 4 sulfur cluster binding"/>
    <property type="evidence" value="ECO:0007669"/>
    <property type="project" value="UniProtKB-KW"/>
</dbReference>
<dbReference type="GO" id="GO:0046872">
    <property type="term" value="F:metal ion binding"/>
    <property type="evidence" value="ECO:0007669"/>
    <property type="project" value="UniProtKB-KW"/>
</dbReference>
<dbReference type="GO" id="GO:0009098">
    <property type="term" value="P:L-leucine biosynthetic process"/>
    <property type="evidence" value="ECO:0007669"/>
    <property type="project" value="UniProtKB-UniRule"/>
</dbReference>
<dbReference type="CDD" id="cd01583">
    <property type="entry name" value="IPMI"/>
    <property type="match status" value="1"/>
</dbReference>
<dbReference type="FunFam" id="3.30.499.10:FF:000006">
    <property type="entry name" value="3-isopropylmalate dehydratase large subunit"/>
    <property type="match status" value="1"/>
</dbReference>
<dbReference type="FunFam" id="3.30.499.10:FF:000007">
    <property type="entry name" value="3-isopropylmalate dehydratase large subunit"/>
    <property type="match status" value="1"/>
</dbReference>
<dbReference type="Gene3D" id="3.30.499.10">
    <property type="entry name" value="Aconitase, domain 3"/>
    <property type="match status" value="2"/>
</dbReference>
<dbReference type="HAMAP" id="MF_01026">
    <property type="entry name" value="LeuC_type1"/>
    <property type="match status" value="1"/>
</dbReference>
<dbReference type="InterPro" id="IPR004430">
    <property type="entry name" value="3-IsopropMal_deHydase_lsu"/>
</dbReference>
<dbReference type="InterPro" id="IPR015931">
    <property type="entry name" value="Acnase/IPM_dHydase_lsu_aba_1/3"/>
</dbReference>
<dbReference type="InterPro" id="IPR001030">
    <property type="entry name" value="Acoase/IPM_deHydtase_lsu_aba"/>
</dbReference>
<dbReference type="InterPro" id="IPR018136">
    <property type="entry name" value="Aconitase_4Fe-4S_BS"/>
</dbReference>
<dbReference type="InterPro" id="IPR036008">
    <property type="entry name" value="Aconitase_4Fe-4S_dom"/>
</dbReference>
<dbReference type="InterPro" id="IPR050067">
    <property type="entry name" value="IPM_dehydratase_rel_enz"/>
</dbReference>
<dbReference type="InterPro" id="IPR033941">
    <property type="entry name" value="IPMI_cat"/>
</dbReference>
<dbReference type="NCBIfam" id="TIGR00170">
    <property type="entry name" value="leuC"/>
    <property type="match status" value="1"/>
</dbReference>
<dbReference type="NCBIfam" id="NF004016">
    <property type="entry name" value="PRK05478.1"/>
    <property type="match status" value="1"/>
</dbReference>
<dbReference type="NCBIfam" id="NF009116">
    <property type="entry name" value="PRK12466.1"/>
    <property type="match status" value="1"/>
</dbReference>
<dbReference type="PANTHER" id="PTHR43822:SF9">
    <property type="entry name" value="3-ISOPROPYLMALATE DEHYDRATASE"/>
    <property type="match status" value="1"/>
</dbReference>
<dbReference type="PANTHER" id="PTHR43822">
    <property type="entry name" value="HOMOACONITASE, MITOCHONDRIAL-RELATED"/>
    <property type="match status" value="1"/>
</dbReference>
<dbReference type="Pfam" id="PF00330">
    <property type="entry name" value="Aconitase"/>
    <property type="match status" value="1"/>
</dbReference>
<dbReference type="PRINTS" id="PR00415">
    <property type="entry name" value="ACONITASE"/>
</dbReference>
<dbReference type="SUPFAM" id="SSF53732">
    <property type="entry name" value="Aconitase iron-sulfur domain"/>
    <property type="match status" value="1"/>
</dbReference>
<dbReference type="PROSITE" id="PS00450">
    <property type="entry name" value="ACONITASE_1"/>
    <property type="match status" value="1"/>
</dbReference>
<dbReference type="PROSITE" id="PS01244">
    <property type="entry name" value="ACONITASE_2"/>
    <property type="match status" value="1"/>
</dbReference>
<evidence type="ECO:0000255" key="1">
    <source>
        <dbReference type="HAMAP-Rule" id="MF_01026"/>
    </source>
</evidence>
<protein>
    <recommendedName>
        <fullName evidence="1">3-isopropylmalate dehydratase large subunit</fullName>
        <ecNumber evidence="1">4.2.1.33</ecNumber>
    </recommendedName>
    <alternativeName>
        <fullName evidence="1">Alpha-IPM isomerase</fullName>
        <shortName evidence="1">IPMI</shortName>
    </alternativeName>
    <alternativeName>
        <fullName evidence="1">Isopropylmalate isomerase</fullName>
    </alternativeName>
</protein>
<reference key="1">
    <citation type="journal article" date="2008" name="Genome Res.">
        <title>Insights from the complete genome sequence of Mycobacterium marinum on the evolution of Mycobacterium tuberculosis.</title>
        <authorList>
            <person name="Stinear T.P."/>
            <person name="Seemann T."/>
            <person name="Harrison P.F."/>
            <person name="Jenkin G.A."/>
            <person name="Davies J.K."/>
            <person name="Johnson P.D."/>
            <person name="Abdellah Z."/>
            <person name="Arrowsmith C."/>
            <person name="Chillingworth T."/>
            <person name="Churcher C."/>
            <person name="Clarke K."/>
            <person name="Cronin A."/>
            <person name="Davis P."/>
            <person name="Goodhead I."/>
            <person name="Holroyd N."/>
            <person name="Jagels K."/>
            <person name="Lord A."/>
            <person name="Moule S."/>
            <person name="Mungall K."/>
            <person name="Norbertczak H."/>
            <person name="Quail M.A."/>
            <person name="Rabbinowitsch E."/>
            <person name="Walker D."/>
            <person name="White B."/>
            <person name="Whitehead S."/>
            <person name="Small P.L."/>
            <person name="Brosch R."/>
            <person name="Ramakrishnan L."/>
            <person name="Fischbach M.A."/>
            <person name="Parkhill J."/>
            <person name="Cole S.T."/>
        </authorList>
    </citation>
    <scope>NUCLEOTIDE SEQUENCE [LARGE SCALE GENOMIC DNA]</scope>
    <source>
        <strain>ATCC BAA-535 / M</strain>
    </source>
</reference>
<organism>
    <name type="scientific">Mycobacterium marinum (strain ATCC BAA-535 / M)</name>
    <dbReference type="NCBI Taxonomy" id="216594"/>
    <lineage>
        <taxon>Bacteria</taxon>
        <taxon>Bacillati</taxon>
        <taxon>Actinomycetota</taxon>
        <taxon>Actinomycetes</taxon>
        <taxon>Mycobacteriales</taxon>
        <taxon>Mycobacteriaceae</taxon>
        <taxon>Mycobacterium</taxon>
        <taxon>Mycobacterium ulcerans group</taxon>
    </lineage>
</organism>
<accession>B2HII1</accession>
<comment type="function">
    <text evidence="1">Catalyzes the isomerization between 2-isopropylmalate and 3-isopropylmalate, via the formation of 2-isopropylmaleate.</text>
</comment>
<comment type="catalytic activity">
    <reaction evidence="1">
        <text>(2R,3S)-3-isopropylmalate = (2S)-2-isopropylmalate</text>
        <dbReference type="Rhea" id="RHEA:32287"/>
        <dbReference type="ChEBI" id="CHEBI:1178"/>
        <dbReference type="ChEBI" id="CHEBI:35121"/>
        <dbReference type="EC" id="4.2.1.33"/>
    </reaction>
</comment>
<comment type="cofactor">
    <cofactor evidence="1">
        <name>[4Fe-4S] cluster</name>
        <dbReference type="ChEBI" id="CHEBI:49883"/>
    </cofactor>
    <text evidence="1">Binds 1 [4Fe-4S] cluster per subunit.</text>
</comment>
<comment type="pathway">
    <text evidence="1">Amino-acid biosynthesis; L-leucine biosynthesis; L-leucine from 3-methyl-2-oxobutanoate: step 2/4.</text>
</comment>
<comment type="subunit">
    <text evidence="1">Heterodimer of LeuC and LeuD.</text>
</comment>
<comment type="similarity">
    <text evidence="1">Belongs to the aconitase/IPM isomerase family. LeuC type 1 subfamily.</text>
</comment>
<name>LEUC_MYCMM</name>
<feature type="chain" id="PRO_1000135696" description="3-isopropylmalate dehydratase large subunit">
    <location>
        <begin position="1"/>
        <end position="473"/>
    </location>
</feature>
<feature type="binding site" evidence="1">
    <location>
        <position position="354"/>
    </location>
    <ligand>
        <name>[4Fe-4S] cluster</name>
        <dbReference type="ChEBI" id="CHEBI:49883"/>
    </ligand>
</feature>
<feature type="binding site" evidence="1">
    <location>
        <position position="414"/>
    </location>
    <ligand>
        <name>[4Fe-4S] cluster</name>
        <dbReference type="ChEBI" id="CHEBI:49883"/>
    </ligand>
</feature>
<feature type="binding site" evidence="1">
    <location>
        <position position="417"/>
    </location>
    <ligand>
        <name>[4Fe-4S] cluster</name>
        <dbReference type="ChEBI" id="CHEBI:49883"/>
    </ligand>
</feature>
<keyword id="KW-0004">4Fe-4S</keyword>
<keyword id="KW-0028">Amino-acid biosynthesis</keyword>
<keyword id="KW-0100">Branched-chain amino acid biosynthesis</keyword>
<keyword id="KW-0408">Iron</keyword>
<keyword id="KW-0411">Iron-sulfur</keyword>
<keyword id="KW-0432">Leucine biosynthesis</keyword>
<keyword id="KW-0456">Lyase</keyword>
<keyword id="KW-0479">Metal-binding</keyword>
<keyword id="KW-1185">Reference proteome</keyword>
<proteinExistence type="inferred from homology"/>
<sequence length="473" mass="50384">MALQTREARTLAEKVWDDHVVVSGRNEAPDLIYIDLHLVHEVTSPQAFDGLRLAGRPVRRPDLTIATEDHNVPTVDIDKPIADPVSRTQVETLRRNCAEFGIRLHPMGDVEQGIVHVVGPQLGLTQPGMTIVCGDSHTSTHGAFGALAMGIGTSEVEHVLATQTLPLRPFKTMAVNVDGRLPAGVSAKDIILALIAKIGTGGGQGHVIEYRGSAIESLSMEGRMTICNMSIEAGARAGMVAPDETTYEYLRNRPHAPTGAQWDAALGYWQQLRTDPGAVFDTEVHLDAAELSPFVTWGTNPGQGVPLCATVPDPELIGDDGERQAAEKALAYMDLEPGKAMRDIAVDAVFVGSCTNGRIEDLRVVAEVLRGRKVAPGVRMLIVPGSMRVRAQAEKEGLGEVFTVAGAEWRQAGCSMCLGMNPDQLAPGERCAATSNRNFEGRQGKGGRTHLVSPAVAAATAVRGTLSAPADLN</sequence>
<gene>
    <name evidence="1" type="primary">leuC</name>
    <name type="ordered locus">MMAR_1726</name>
</gene>